<comment type="function">
    <text evidence="2">One of the essential components for the initiation of protein synthesis. Protects formylmethionyl-tRNA from spontaneous hydrolysis and promotes its binding to the 30S ribosomal subunits. Also involved in the hydrolysis of GTP during the formation of the 70S ribosomal complex.</text>
</comment>
<comment type="subcellular location">
    <subcellularLocation>
        <location evidence="2">Cytoplasm</location>
    </subcellularLocation>
</comment>
<comment type="similarity">
    <text evidence="2">Belongs to the TRAFAC class translation factor GTPase superfamily. Classic translation factor GTPase family. IF-2 subfamily.</text>
</comment>
<feature type="chain" id="PRO_1000008246" description="Translation initiation factor IF-2">
    <location>
        <begin position="1"/>
        <end position="846"/>
    </location>
</feature>
<feature type="domain" description="tr-type G">
    <location>
        <begin position="345"/>
        <end position="512"/>
    </location>
</feature>
<feature type="region of interest" description="Disordered" evidence="3">
    <location>
        <begin position="198"/>
        <end position="219"/>
    </location>
</feature>
<feature type="region of interest" description="G1" evidence="1">
    <location>
        <begin position="354"/>
        <end position="361"/>
    </location>
</feature>
<feature type="region of interest" description="G2" evidence="1">
    <location>
        <begin position="379"/>
        <end position="383"/>
    </location>
</feature>
<feature type="region of interest" description="G3" evidence="1">
    <location>
        <begin position="400"/>
        <end position="403"/>
    </location>
</feature>
<feature type="region of interest" description="G4" evidence="1">
    <location>
        <begin position="454"/>
        <end position="457"/>
    </location>
</feature>
<feature type="region of interest" description="G5" evidence="1">
    <location>
        <begin position="490"/>
        <end position="492"/>
    </location>
</feature>
<feature type="compositionally biased region" description="Basic residues" evidence="3">
    <location>
        <begin position="207"/>
        <end position="219"/>
    </location>
</feature>
<feature type="binding site" evidence="2">
    <location>
        <begin position="354"/>
        <end position="361"/>
    </location>
    <ligand>
        <name>GTP</name>
        <dbReference type="ChEBI" id="CHEBI:37565"/>
    </ligand>
</feature>
<feature type="binding site" evidence="2">
    <location>
        <begin position="400"/>
        <end position="404"/>
    </location>
    <ligand>
        <name>GTP</name>
        <dbReference type="ChEBI" id="CHEBI:37565"/>
    </ligand>
</feature>
<feature type="binding site" evidence="2">
    <location>
        <begin position="454"/>
        <end position="457"/>
    </location>
    <ligand>
        <name>GTP</name>
        <dbReference type="ChEBI" id="CHEBI:37565"/>
    </ligand>
</feature>
<protein>
    <recommendedName>
        <fullName evidence="2">Translation initiation factor IF-2</fullName>
    </recommendedName>
</protein>
<gene>
    <name evidence="2" type="primary">infB</name>
    <name type="ordered locus">FTH_1746</name>
</gene>
<accession>Q0BK70</accession>
<name>IF2_FRATO</name>
<dbReference type="EMBL" id="CP000437">
    <property type="protein sequence ID" value="ABI83514.1"/>
    <property type="molecule type" value="Genomic_DNA"/>
</dbReference>
<dbReference type="RefSeq" id="WP_011648786.1">
    <property type="nucleotide sequence ID" value="NC_017463.1"/>
</dbReference>
<dbReference type="SMR" id="Q0BK70"/>
<dbReference type="KEGG" id="fth:FTH_1746"/>
<dbReference type="GO" id="GO:0005829">
    <property type="term" value="C:cytosol"/>
    <property type="evidence" value="ECO:0007669"/>
    <property type="project" value="TreeGrafter"/>
</dbReference>
<dbReference type="GO" id="GO:0005525">
    <property type="term" value="F:GTP binding"/>
    <property type="evidence" value="ECO:0007669"/>
    <property type="project" value="UniProtKB-KW"/>
</dbReference>
<dbReference type="GO" id="GO:0003924">
    <property type="term" value="F:GTPase activity"/>
    <property type="evidence" value="ECO:0007669"/>
    <property type="project" value="UniProtKB-UniRule"/>
</dbReference>
<dbReference type="GO" id="GO:0003743">
    <property type="term" value="F:translation initiation factor activity"/>
    <property type="evidence" value="ECO:0007669"/>
    <property type="project" value="UniProtKB-UniRule"/>
</dbReference>
<dbReference type="CDD" id="cd01887">
    <property type="entry name" value="IF2_eIF5B"/>
    <property type="match status" value="1"/>
</dbReference>
<dbReference type="CDD" id="cd03702">
    <property type="entry name" value="IF2_mtIF2_II"/>
    <property type="match status" value="1"/>
</dbReference>
<dbReference type="CDD" id="cd03692">
    <property type="entry name" value="mtIF2_IVc"/>
    <property type="match status" value="1"/>
</dbReference>
<dbReference type="FunFam" id="2.40.30.10:FF:000007">
    <property type="entry name" value="Translation initiation factor IF-2"/>
    <property type="match status" value="1"/>
</dbReference>
<dbReference type="FunFam" id="2.40.30.10:FF:000008">
    <property type="entry name" value="Translation initiation factor IF-2"/>
    <property type="match status" value="1"/>
</dbReference>
<dbReference type="FunFam" id="3.40.50.10050:FF:000001">
    <property type="entry name" value="Translation initiation factor IF-2"/>
    <property type="match status" value="1"/>
</dbReference>
<dbReference type="FunFam" id="3.40.50.300:FF:000019">
    <property type="entry name" value="Translation initiation factor IF-2"/>
    <property type="match status" value="1"/>
</dbReference>
<dbReference type="Gene3D" id="3.40.50.300">
    <property type="entry name" value="P-loop containing nucleotide triphosphate hydrolases"/>
    <property type="match status" value="1"/>
</dbReference>
<dbReference type="Gene3D" id="3.30.56.50">
    <property type="entry name" value="Putative DNA-binding domain, N-terminal subdomain of bacterial translation initiation factor IF2"/>
    <property type="match status" value="1"/>
</dbReference>
<dbReference type="Gene3D" id="2.40.30.10">
    <property type="entry name" value="Translation factors"/>
    <property type="match status" value="2"/>
</dbReference>
<dbReference type="Gene3D" id="3.40.50.10050">
    <property type="entry name" value="Translation initiation factor IF- 2, domain 3"/>
    <property type="match status" value="1"/>
</dbReference>
<dbReference type="HAMAP" id="MF_00100_B">
    <property type="entry name" value="IF_2_B"/>
    <property type="match status" value="1"/>
</dbReference>
<dbReference type="InterPro" id="IPR009061">
    <property type="entry name" value="DNA-bd_dom_put_sf"/>
</dbReference>
<dbReference type="InterPro" id="IPR053905">
    <property type="entry name" value="EF-G-like_DII"/>
</dbReference>
<dbReference type="InterPro" id="IPR044145">
    <property type="entry name" value="IF2_II"/>
</dbReference>
<dbReference type="InterPro" id="IPR006847">
    <property type="entry name" value="IF2_N"/>
</dbReference>
<dbReference type="InterPro" id="IPR027417">
    <property type="entry name" value="P-loop_NTPase"/>
</dbReference>
<dbReference type="InterPro" id="IPR005225">
    <property type="entry name" value="Small_GTP-bd"/>
</dbReference>
<dbReference type="InterPro" id="IPR000795">
    <property type="entry name" value="T_Tr_GTP-bd_dom"/>
</dbReference>
<dbReference type="InterPro" id="IPR000178">
    <property type="entry name" value="TF_IF2_bacterial-like"/>
</dbReference>
<dbReference type="InterPro" id="IPR015760">
    <property type="entry name" value="TIF_IF2"/>
</dbReference>
<dbReference type="InterPro" id="IPR023115">
    <property type="entry name" value="TIF_IF2_dom3"/>
</dbReference>
<dbReference type="InterPro" id="IPR036925">
    <property type="entry name" value="TIF_IF2_dom3_sf"/>
</dbReference>
<dbReference type="InterPro" id="IPR009000">
    <property type="entry name" value="Transl_B-barrel_sf"/>
</dbReference>
<dbReference type="NCBIfam" id="TIGR00487">
    <property type="entry name" value="IF-2"/>
    <property type="match status" value="1"/>
</dbReference>
<dbReference type="NCBIfam" id="TIGR00231">
    <property type="entry name" value="small_GTP"/>
    <property type="match status" value="1"/>
</dbReference>
<dbReference type="PANTHER" id="PTHR43381:SF5">
    <property type="entry name" value="TR-TYPE G DOMAIN-CONTAINING PROTEIN"/>
    <property type="match status" value="1"/>
</dbReference>
<dbReference type="PANTHER" id="PTHR43381">
    <property type="entry name" value="TRANSLATION INITIATION FACTOR IF-2-RELATED"/>
    <property type="match status" value="1"/>
</dbReference>
<dbReference type="Pfam" id="PF22042">
    <property type="entry name" value="EF-G_D2"/>
    <property type="match status" value="1"/>
</dbReference>
<dbReference type="Pfam" id="PF00009">
    <property type="entry name" value="GTP_EFTU"/>
    <property type="match status" value="1"/>
</dbReference>
<dbReference type="Pfam" id="PF11987">
    <property type="entry name" value="IF-2"/>
    <property type="match status" value="1"/>
</dbReference>
<dbReference type="Pfam" id="PF04760">
    <property type="entry name" value="IF2_N"/>
    <property type="match status" value="2"/>
</dbReference>
<dbReference type="SUPFAM" id="SSF52156">
    <property type="entry name" value="Initiation factor IF2/eIF5b, domain 3"/>
    <property type="match status" value="1"/>
</dbReference>
<dbReference type="SUPFAM" id="SSF52540">
    <property type="entry name" value="P-loop containing nucleoside triphosphate hydrolases"/>
    <property type="match status" value="1"/>
</dbReference>
<dbReference type="SUPFAM" id="SSF46955">
    <property type="entry name" value="Putative DNA-binding domain"/>
    <property type="match status" value="1"/>
</dbReference>
<dbReference type="SUPFAM" id="SSF50447">
    <property type="entry name" value="Translation proteins"/>
    <property type="match status" value="2"/>
</dbReference>
<dbReference type="PROSITE" id="PS51722">
    <property type="entry name" value="G_TR_2"/>
    <property type="match status" value="1"/>
</dbReference>
<dbReference type="PROSITE" id="PS01176">
    <property type="entry name" value="IF2"/>
    <property type="match status" value="1"/>
</dbReference>
<organism>
    <name type="scientific">Francisella tularensis subsp. holarctica (strain OSU18)</name>
    <dbReference type="NCBI Taxonomy" id="393011"/>
    <lineage>
        <taxon>Bacteria</taxon>
        <taxon>Pseudomonadati</taxon>
        <taxon>Pseudomonadota</taxon>
        <taxon>Gammaproteobacteria</taxon>
        <taxon>Thiotrichales</taxon>
        <taxon>Francisellaceae</taxon>
        <taxon>Francisella</taxon>
    </lineage>
</organism>
<proteinExistence type="inferred from homology"/>
<sequence length="846" mass="92396">MAEITVGQLAQQTNKEVDALLKQLKSFGIEKSSEKDTLTPTEMKTLLEKINSAKNTATRKKVTSVKLDGKHKINVSVKRKRRVAKKMEQQESTTLEQPQELETMVQEVSQQVDIVKEQDNIEQIVENKEAVKVQEQRQAEIAKPVIKDSGFKITAMPEIKIEEIVAEDDEGLAASDKQAKKKAAKKVFSEAVNTNTKYKREEEEKKSKAKKAGGKGFKKANPRQLSQLAGDLESFDEFGAKKGKLKAPKVKKQEFTKPVENTVRTVEIHEGITVSELAQKMAVKGAEIVKVLFNMGVMATINQSLDQDTAILIVEEMGHKYTLHNENALEEAVTIVDRSSYKKISRAPVVTIMGHVDHGKTSLLDYIRQTRVVAGEAGGITQHIGAYSVKTDKGSITFLDTPGHEAFTSMRARGAKSTDIVILVVAADDGVMPQTEEAIQHAKAARVPIVVAVNKIDKPEADSDKVISELAQRNVIPESWGGDVMFVNVSAKTGEGVADLLEAVLLQSEVLELEAFAEGLAEGVVIESRLEKGRGPVATVLVQNGNLKQGDNILCGTEYGRVRAMHNDLGKKIKAAGPATPVEILGLSGVPAAGDEMVVIENEKKAKELAAQRSQKQKEAKIAQEQSLKLSNMFNNMGKEGEQQVLKIILKGDVQGSVEAIRESLLKLSTDEVKVDIIASGIGAITSSDVTLAVASTAVVIGFNVRADSAAKKLAETDGVEFRYYNIIYDLIDDVKKAMSGLLSPEMKEQIIGIAEVREVYRSSKFGSIAGCMVIEGVVKRTNPIRVLRNNVVIYEGTLESLKRFKDDASEVKKGLECGIGVKNYNDVREGDQIEVFEVIEVAKEL</sequence>
<keyword id="KW-0963">Cytoplasm</keyword>
<keyword id="KW-0342">GTP-binding</keyword>
<keyword id="KW-0396">Initiation factor</keyword>
<keyword id="KW-0547">Nucleotide-binding</keyword>
<keyword id="KW-0648">Protein biosynthesis</keyword>
<reference key="1">
    <citation type="journal article" date="2006" name="J. Bacteriol.">
        <title>Chromosome rearrangement and diversification of Francisella tularensis revealed by the type B (OSU18) genome sequence.</title>
        <authorList>
            <person name="Petrosino J.F."/>
            <person name="Xiang Q."/>
            <person name="Karpathy S.E."/>
            <person name="Jiang H."/>
            <person name="Yerrapragada S."/>
            <person name="Liu Y."/>
            <person name="Gioia J."/>
            <person name="Hemphill L."/>
            <person name="Gonzalez A."/>
            <person name="Raghavan T.M."/>
            <person name="Uzman A."/>
            <person name="Fox G.E."/>
            <person name="Highlander S."/>
            <person name="Reichard M."/>
            <person name="Morton R.J."/>
            <person name="Clinkenbeard K.D."/>
            <person name="Weinstock G.M."/>
        </authorList>
    </citation>
    <scope>NUCLEOTIDE SEQUENCE [LARGE SCALE GENOMIC DNA]</scope>
    <source>
        <strain>OSU18</strain>
    </source>
</reference>
<evidence type="ECO:0000250" key="1"/>
<evidence type="ECO:0000255" key="2">
    <source>
        <dbReference type="HAMAP-Rule" id="MF_00100"/>
    </source>
</evidence>
<evidence type="ECO:0000256" key="3">
    <source>
        <dbReference type="SAM" id="MobiDB-lite"/>
    </source>
</evidence>